<reference key="1">
    <citation type="journal article" date="1996" name="Planta">
        <title>Expression of abundant mRNAs during somatic embryogenesis of white spruce [Picea glauca (Moench) Voss].</title>
        <authorList>
            <person name="Dong J.Z."/>
            <person name="Dunstan D.I."/>
        </authorList>
    </citation>
    <scope>NUCLEOTIDE SEQUENCE [MRNA]</scope>
</reference>
<organism>
    <name type="scientific">Picea glauca</name>
    <name type="common">White spruce</name>
    <name type="synonym">Pinus glauca</name>
    <dbReference type="NCBI Taxonomy" id="3330"/>
    <lineage>
        <taxon>Eukaryota</taxon>
        <taxon>Viridiplantae</taxon>
        <taxon>Streptophyta</taxon>
        <taxon>Embryophyta</taxon>
        <taxon>Tracheophyta</taxon>
        <taxon>Spermatophyta</taxon>
        <taxon>Pinopsida</taxon>
        <taxon>Pinidae</taxon>
        <taxon>Conifers I</taxon>
        <taxon>Pinales</taxon>
        <taxon>Pinaceae</taxon>
        <taxon>Picea</taxon>
    </lineage>
</organism>
<protein>
    <recommendedName>
        <fullName>Em-like protein</fullName>
    </recommendedName>
</protein>
<proteinExistence type="inferred from homology"/>
<feature type="chain" id="PRO_0000185687" description="Em-like protein">
    <location>
        <begin position="1"/>
        <end position="91"/>
    </location>
</feature>
<feature type="region of interest" description="Disordered" evidence="1">
    <location>
        <begin position="1"/>
        <end position="91"/>
    </location>
</feature>
<feature type="compositionally biased region" description="Basic and acidic residues" evidence="1">
    <location>
        <begin position="1"/>
        <end position="18"/>
    </location>
</feature>
<feature type="compositionally biased region" description="Basic and acidic residues" evidence="1">
    <location>
        <begin position="31"/>
        <end position="51"/>
    </location>
</feature>
<feature type="compositionally biased region" description="Gly residues" evidence="1">
    <location>
        <begin position="62"/>
        <end position="73"/>
    </location>
</feature>
<feature type="compositionally biased region" description="Basic and acidic residues" evidence="1">
    <location>
        <begin position="75"/>
        <end position="91"/>
    </location>
</feature>
<comment type="similarity">
    <text evidence="2">Belongs to the small hydrophilic plant seed protein family.</text>
</comment>
<evidence type="ECO:0000256" key="1">
    <source>
        <dbReference type="SAM" id="MobiDB-lite"/>
    </source>
</evidence>
<evidence type="ECO:0000305" key="2"/>
<accession>Q40864</accession>
<dbReference type="EMBL" id="L42464">
    <property type="protein sequence ID" value="AAA85366.1"/>
    <property type="molecule type" value="mRNA"/>
</dbReference>
<dbReference type="PIR" id="T09293">
    <property type="entry name" value="T09293"/>
</dbReference>
<dbReference type="GO" id="GO:0005829">
    <property type="term" value="C:cytosol"/>
    <property type="evidence" value="ECO:0007669"/>
    <property type="project" value="TreeGrafter"/>
</dbReference>
<dbReference type="GO" id="GO:0009737">
    <property type="term" value="P:response to abscisic acid"/>
    <property type="evidence" value="ECO:0007669"/>
    <property type="project" value="TreeGrafter"/>
</dbReference>
<dbReference type="InterPro" id="IPR038956">
    <property type="entry name" value="LEA_5"/>
</dbReference>
<dbReference type="InterPro" id="IPR022377">
    <property type="entry name" value="Sm_Hydphi_plant_seed_CS"/>
</dbReference>
<dbReference type="InterPro" id="IPR000389">
    <property type="entry name" value="Small_hydrophilic_seed_prot"/>
</dbReference>
<dbReference type="PANTHER" id="PTHR34671">
    <property type="entry name" value="EM-LIKE PROTEIN GEA1"/>
    <property type="match status" value="1"/>
</dbReference>
<dbReference type="PANTHER" id="PTHR34671:SF11">
    <property type="entry name" value="EM-LIKE PROTEIN GEA1"/>
    <property type="match status" value="1"/>
</dbReference>
<dbReference type="Pfam" id="PF00477">
    <property type="entry name" value="LEA_5"/>
    <property type="match status" value="1"/>
</dbReference>
<dbReference type="PROSITE" id="PS00431">
    <property type="entry name" value="SMALL_HYDR_PLANT_SEED"/>
    <property type="match status" value="1"/>
</dbReference>
<name>EML_PICGL</name>
<sequence length="91" mass="9771">MEQQQDRRELDAKAREGETVVPGGTGGKSLDAQERLAEGRSRGGQTRKEQIGSEGYQEMGRKGGLSSAGGPGGERASEEGRPIDESKYRHP</sequence>